<comment type="catalytic activity">
    <reaction evidence="1">
        <text>1-(5-phospho-beta-D-ribosyl)-5-[(5-phospho-beta-D-ribosylamino)methylideneamino]imidazole-4-carboxamide = 5-[(5-phospho-1-deoxy-D-ribulos-1-ylimino)methylamino]-1-(5-phospho-beta-D-ribosyl)imidazole-4-carboxamide</text>
        <dbReference type="Rhea" id="RHEA:15469"/>
        <dbReference type="ChEBI" id="CHEBI:58435"/>
        <dbReference type="ChEBI" id="CHEBI:58525"/>
        <dbReference type="EC" id="5.3.1.16"/>
    </reaction>
</comment>
<comment type="pathway">
    <text evidence="1">Amino-acid biosynthesis; L-histidine biosynthesis; L-histidine from 5-phospho-alpha-D-ribose 1-diphosphate: step 4/9.</text>
</comment>
<comment type="subcellular location">
    <subcellularLocation>
        <location evidence="1">Cytoplasm</location>
    </subcellularLocation>
</comment>
<comment type="similarity">
    <text evidence="1">Belongs to the HisA/HisF family.</text>
</comment>
<organism>
    <name type="scientific">Shigella flexneri serotype 5b (strain 8401)</name>
    <dbReference type="NCBI Taxonomy" id="373384"/>
    <lineage>
        <taxon>Bacteria</taxon>
        <taxon>Pseudomonadati</taxon>
        <taxon>Pseudomonadota</taxon>
        <taxon>Gammaproteobacteria</taxon>
        <taxon>Enterobacterales</taxon>
        <taxon>Enterobacteriaceae</taxon>
        <taxon>Shigella</taxon>
    </lineage>
</organism>
<name>HIS4_SHIF8</name>
<gene>
    <name evidence="1" type="primary">hisA</name>
    <name type="ordered locus">SFV_2084</name>
</gene>
<accession>Q0T3A3</accession>
<reference key="1">
    <citation type="journal article" date="2006" name="BMC Genomics">
        <title>Complete genome sequence of Shigella flexneri 5b and comparison with Shigella flexneri 2a.</title>
        <authorList>
            <person name="Nie H."/>
            <person name="Yang F."/>
            <person name="Zhang X."/>
            <person name="Yang J."/>
            <person name="Chen L."/>
            <person name="Wang J."/>
            <person name="Xiong Z."/>
            <person name="Peng J."/>
            <person name="Sun L."/>
            <person name="Dong J."/>
            <person name="Xue Y."/>
            <person name="Xu X."/>
            <person name="Chen S."/>
            <person name="Yao Z."/>
            <person name="Shen Y."/>
            <person name="Jin Q."/>
        </authorList>
    </citation>
    <scope>NUCLEOTIDE SEQUENCE [LARGE SCALE GENOMIC DNA]</scope>
    <source>
        <strain>8401</strain>
    </source>
</reference>
<feature type="chain" id="PRO_0000290542" description="1-(5-phosphoribosyl)-5-[(5-phosphoribosylamino)methylideneamino] imidazole-4-carboxamide isomerase">
    <location>
        <begin position="1"/>
        <end position="245"/>
    </location>
</feature>
<feature type="active site" description="Proton acceptor" evidence="1">
    <location>
        <position position="7"/>
    </location>
</feature>
<feature type="active site" description="Proton donor" evidence="1">
    <location>
        <position position="129"/>
    </location>
</feature>
<sequence length="245" mass="25969">MIIPALDLIDGTVVRLHQGDYGKQRDYGNDPLPRLQDYAAQGAEVLHLVDLTGAKDPAKRQIPLIKTLVAGVNVPVQVGGGVRSEEDVAALLEAGVARVVVGSTAVKSPDVVKGWFERFGADALVLALDVRIDEQGNKQVAVSGWQENSGVSLEQLVETYLPVGLKHVLCTDISRDGTLAGSNVSLYEEVCARYPQVAFQSSGGIGDINDVAALRGTGVRGVIVGRALLEGKFTVKEAIACWQNA</sequence>
<keyword id="KW-0028">Amino-acid biosynthesis</keyword>
<keyword id="KW-0963">Cytoplasm</keyword>
<keyword id="KW-0368">Histidine biosynthesis</keyword>
<keyword id="KW-0413">Isomerase</keyword>
<proteinExistence type="inferred from homology"/>
<protein>
    <recommendedName>
        <fullName evidence="1">1-(5-phosphoribosyl)-5-[(5-phosphoribosylamino)methylideneamino] imidazole-4-carboxamide isomerase</fullName>
        <ecNumber evidence="1">5.3.1.16</ecNumber>
    </recommendedName>
    <alternativeName>
        <fullName evidence="1">Phosphoribosylformimino-5-aminoimidazole carboxamide ribotide isomerase</fullName>
    </alternativeName>
</protein>
<evidence type="ECO:0000255" key="1">
    <source>
        <dbReference type="HAMAP-Rule" id="MF_01014"/>
    </source>
</evidence>
<dbReference type="EC" id="5.3.1.16" evidence="1"/>
<dbReference type="EMBL" id="CP000266">
    <property type="protein sequence ID" value="ABF04212.1"/>
    <property type="molecule type" value="Genomic_DNA"/>
</dbReference>
<dbReference type="RefSeq" id="WP_000586440.1">
    <property type="nucleotide sequence ID" value="NC_008258.1"/>
</dbReference>
<dbReference type="SMR" id="Q0T3A3"/>
<dbReference type="KEGG" id="sfv:SFV_2084"/>
<dbReference type="HOGENOM" id="CLU_048577_1_2_6"/>
<dbReference type="UniPathway" id="UPA00031">
    <property type="reaction ID" value="UER00009"/>
</dbReference>
<dbReference type="Proteomes" id="UP000000659">
    <property type="component" value="Chromosome"/>
</dbReference>
<dbReference type="GO" id="GO:0005737">
    <property type="term" value="C:cytoplasm"/>
    <property type="evidence" value="ECO:0007669"/>
    <property type="project" value="UniProtKB-SubCell"/>
</dbReference>
<dbReference type="GO" id="GO:0003949">
    <property type="term" value="F:1-(5-phosphoribosyl)-5-[(5-phosphoribosylamino)methylideneamino]imidazole-4-carboxamide isomerase activity"/>
    <property type="evidence" value="ECO:0007669"/>
    <property type="project" value="UniProtKB-UniRule"/>
</dbReference>
<dbReference type="GO" id="GO:0000105">
    <property type="term" value="P:L-histidine biosynthetic process"/>
    <property type="evidence" value="ECO:0007669"/>
    <property type="project" value="UniProtKB-UniRule"/>
</dbReference>
<dbReference type="GO" id="GO:0000162">
    <property type="term" value="P:L-tryptophan biosynthetic process"/>
    <property type="evidence" value="ECO:0007669"/>
    <property type="project" value="TreeGrafter"/>
</dbReference>
<dbReference type="CDD" id="cd04732">
    <property type="entry name" value="HisA"/>
    <property type="match status" value="1"/>
</dbReference>
<dbReference type="FunFam" id="3.20.20.70:FF:000009">
    <property type="entry name" value="1-(5-phosphoribosyl)-5-[(5-phosphoribosylamino)methylideneamino] imidazole-4-carboxamide isomerase"/>
    <property type="match status" value="1"/>
</dbReference>
<dbReference type="Gene3D" id="3.20.20.70">
    <property type="entry name" value="Aldolase class I"/>
    <property type="match status" value="1"/>
</dbReference>
<dbReference type="HAMAP" id="MF_01014">
    <property type="entry name" value="HisA"/>
    <property type="match status" value="1"/>
</dbReference>
<dbReference type="InterPro" id="IPR013785">
    <property type="entry name" value="Aldolase_TIM"/>
</dbReference>
<dbReference type="InterPro" id="IPR006062">
    <property type="entry name" value="His_biosynth"/>
</dbReference>
<dbReference type="InterPro" id="IPR006063">
    <property type="entry name" value="HisA_bact_arch"/>
</dbReference>
<dbReference type="InterPro" id="IPR044524">
    <property type="entry name" value="Isoase_HisA-like"/>
</dbReference>
<dbReference type="InterPro" id="IPR023016">
    <property type="entry name" value="Isoase_HisA-like_bact"/>
</dbReference>
<dbReference type="InterPro" id="IPR011060">
    <property type="entry name" value="RibuloseP-bd_barrel"/>
</dbReference>
<dbReference type="NCBIfam" id="TIGR00007">
    <property type="entry name" value="1-(5-phosphoribosyl)-5-[(5-phosphoribosylamino)methylideneamino]imidazole-4-carboxamide isomerase"/>
    <property type="match status" value="1"/>
</dbReference>
<dbReference type="PANTHER" id="PTHR43090">
    <property type="entry name" value="1-(5-PHOSPHORIBOSYL)-5-[(5-PHOSPHORIBOSYLAMINO)METHYLIDENEAMINO] IMIDAZOLE-4-CARBOXAMIDE ISOMERASE"/>
    <property type="match status" value="1"/>
</dbReference>
<dbReference type="PANTHER" id="PTHR43090:SF2">
    <property type="entry name" value="1-(5-PHOSPHORIBOSYL)-5-[(5-PHOSPHORIBOSYLAMINO)METHYLIDENEAMINO] IMIDAZOLE-4-CARBOXAMIDE ISOMERASE"/>
    <property type="match status" value="1"/>
</dbReference>
<dbReference type="Pfam" id="PF00977">
    <property type="entry name" value="His_biosynth"/>
    <property type="match status" value="1"/>
</dbReference>
<dbReference type="SUPFAM" id="SSF51366">
    <property type="entry name" value="Ribulose-phoshate binding barrel"/>
    <property type="match status" value="1"/>
</dbReference>